<keyword id="KW-0051">Antiviral defense</keyword>
<reference key="1">
    <citation type="journal article" date="2015" name="Genome Announc.">
        <title>Next-Generation Whole-Genome Sequencing of Eight Strains of Bacillus cereus, Isolated from Food.</title>
        <authorList>
            <person name="Krawczyk A.O."/>
            <person name="de Jong A."/>
            <person name="Eijlander R.T."/>
            <person name="Berendsen E.M."/>
            <person name="Holsappel S."/>
            <person name="Wells-Bennik M.H."/>
            <person name="Kuipers O.P."/>
        </authorList>
    </citation>
    <scope>NUCLEOTIDE SEQUENCE [LARGE SCALE GENOMIC DNA]</scope>
    <source>
        <strain>B4087</strain>
    </source>
</reference>
<reference key="2">
    <citation type="journal article" date="2018" name="Science">
        <title>Systematic discovery of antiphage defense systems in the microbial pangenome.</title>
        <authorList>
            <person name="Doron S."/>
            <person name="Melamed S."/>
            <person name="Ofir G."/>
            <person name="Leavitt A."/>
            <person name="Lopatina A."/>
            <person name="Keren M."/>
            <person name="Amitai G."/>
            <person name="Sorek R."/>
        </authorList>
    </citation>
    <scope>FUNCTION</scope>
    <scope>DISRUPTION PHENOTYPE</scope>
    <scope>EXPRESSION IN B.SUBTILIS</scope>
    <source>
        <strain>B4087</strain>
    </source>
</reference>
<protein>
    <recommendedName>
        <fullName evidence="2">Hachiman protein HamA</fullName>
    </recommendedName>
</protein>
<dbReference type="EMBL" id="LCYM01000053">
    <property type="protein sequence ID" value="KLA13163.1"/>
    <property type="molecule type" value="Genomic_DNA"/>
</dbReference>
<dbReference type="RefSeq" id="WP_033693698.1">
    <property type="nucleotide sequence ID" value="NZ_LRPI01000069.1"/>
</dbReference>
<dbReference type="SMR" id="P0DW39"/>
<dbReference type="GO" id="GO:0051607">
    <property type="term" value="P:defense response to virus"/>
    <property type="evidence" value="ECO:0007669"/>
    <property type="project" value="UniProtKB-KW"/>
</dbReference>
<dbReference type="InterPro" id="IPR014976">
    <property type="entry name" value="AbpA_HamA_C"/>
</dbReference>
<dbReference type="Pfam" id="PF08878">
    <property type="entry name" value="HamA"/>
    <property type="match status" value="1"/>
</dbReference>
<proteinExistence type="predicted"/>
<comment type="function">
    <text evidence="1">Component of antiviral defense system Hachiman, composed of HamA and HamB. Expression of Hachiman in B.subtilis (strain BEST7003) confers resistance to phages phi105, phi29, phi3T, rho14, SBSphiJ, SpBeta and SPR.</text>
</comment>
<comment type="disruption phenotype">
    <text evidence="1">When this gene is missing the Hachiman system does not confer SpBeta resistance in B.subtilis.</text>
</comment>
<accession>P0DW39</accession>
<gene>
    <name evidence="2" type="primary">hamA</name>
    <name evidence="3" type="ORF">B4087_2533</name>
</gene>
<sequence length="271" mass="31090">MTIQDDMVGKHPIENDFWKWLQHEDTESSDLKRHRYLEVDSSNRDEAIKSVAAWLIKYHLSEGKKRVIRKKQEILEKHDFAEYAQSLHVFPKSDKTQKGNLGEIFLSEYLSQTSGVQILVYKLHYNPNIDQSMKGDDVLLVNPDKVLLGESKFRSTPNKRAVEEASELMKDKLTLPMSLGFIADRLFEQGKDELGEVIFDLQFKMSSIEIDIKNIGFLLSTKKVRSIVENNLSSPNSDFIFISLGMDDPAAFLKSVFDYAESNLLEGSYET</sequence>
<feature type="chain" id="PRO_0000456371" description="Hachiman protein HamA">
    <location>
        <begin position="1"/>
        <end position="271"/>
    </location>
</feature>
<evidence type="ECO:0000269" key="1">
    <source>
    </source>
</evidence>
<evidence type="ECO:0000303" key="2">
    <source>
    </source>
</evidence>
<evidence type="ECO:0000312" key="3">
    <source>
        <dbReference type="EMBL" id="KLA13163.1"/>
    </source>
</evidence>
<name>HAMA_BACCE</name>
<organism>
    <name type="scientific">Bacillus cereus</name>
    <dbReference type="NCBI Taxonomy" id="1396"/>
    <lineage>
        <taxon>Bacteria</taxon>
        <taxon>Bacillati</taxon>
        <taxon>Bacillota</taxon>
        <taxon>Bacilli</taxon>
        <taxon>Bacillales</taxon>
        <taxon>Bacillaceae</taxon>
        <taxon>Bacillus</taxon>
        <taxon>Bacillus cereus group</taxon>
    </lineage>
</organism>